<gene>
    <name type="primary">TTR</name>
</gene>
<sequence length="145" mass="15844">MASHRLFLLCLAGLVFMSEAGPTGQSKCPLMVKVLDAVRGSPAVNVAVKVFKKAADETWEPFASGKTSESGELHGLTTDEKFVEGVYKVELDTKSYWKTLGISPFHEYVEVVFTANDSGQRRYTIAALLSPYSYSTTALVSDPKE</sequence>
<keyword id="KW-0301">Gamma-carboxyglutamic acid</keyword>
<keyword id="KW-0325">Glycoprotein</keyword>
<keyword id="KW-0372">Hormone</keyword>
<keyword id="KW-0597">Phosphoprotein</keyword>
<keyword id="KW-1185">Reference proteome</keyword>
<keyword id="KW-0964">Secreted</keyword>
<keyword id="KW-0732">Signal</keyword>
<keyword id="KW-0765">Sulfation</keyword>
<keyword id="KW-0795">Thyroid hormone</keyword>
<keyword id="KW-0813">Transport</keyword>
<accession>Q9MYN8</accession>
<dbReference type="EMBL" id="AJ277290">
    <property type="protein sequence ID" value="CAB86721.1"/>
    <property type="molecule type" value="mRNA"/>
</dbReference>
<dbReference type="EMBL" id="AF251940">
    <property type="protein sequence ID" value="AAF70058.1"/>
    <property type="molecule type" value="mRNA"/>
</dbReference>
<dbReference type="RefSeq" id="NP_001278814.1">
    <property type="nucleotide sequence ID" value="NM_001291885.1"/>
</dbReference>
<dbReference type="SMR" id="Q9MYN8"/>
<dbReference type="FunCoup" id="Q9MYN8">
    <property type="interactions" value="337"/>
</dbReference>
<dbReference type="STRING" id="9365.ENSEEUP00000003808"/>
<dbReference type="GlyCosmos" id="Q9MYN8">
    <property type="glycosylation" value="1 site, No reported glycans"/>
</dbReference>
<dbReference type="GeneID" id="103111622"/>
<dbReference type="CTD" id="7276"/>
<dbReference type="eggNOG" id="KOG3006">
    <property type="taxonomic scope" value="Eukaryota"/>
</dbReference>
<dbReference type="HOGENOM" id="CLU_115536_1_0_1"/>
<dbReference type="InParanoid" id="Q9MYN8"/>
<dbReference type="OrthoDB" id="10265230at2759"/>
<dbReference type="TreeFam" id="TF300210"/>
<dbReference type="Proteomes" id="UP000079721">
    <property type="component" value="Unplaced"/>
</dbReference>
<dbReference type="GO" id="GO:0005615">
    <property type="term" value="C:extracellular space"/>
    <property type="evidence" value="ECO:0007669"/>
    <property type="project" value="TreeGrafter"/>
</dbReference>
<dbReference type="GO" id="GO:0005179">
    <property type="term" value="F:hormone activity"/>
    <property type="evidence" value="ECO:0007669"/>
    <property type="project" value="UniProtKB-KW"/>
</dbReference>
<dbReference type="GO" id="GO:0070324">
    <property type="term" value="F:thyroid hormone binding"/>
    <property type="evidence" value="ECO:0007669"/>
    <property type="project" value="TreeGrafter"/>
</dbReference>
<dbReference type="GO" id="GO:0006144">
    <property type="term" value="P:purine nucleobase metabolic process"/>
    <property type="evidence" value="ECO:0007669"/>
    <property type="project" value="TreeGrafter"/>
</dbReference>
<dbReference type="CDD" id="cd05821">
    <property type="entry name" value="TLP_Transthyretin"/>
    <property type="match status" value="1"/>
</dbReference>
<dbReference type="FunFam" id="2.60.40.180:FF:000002">
    <property type="entry name" value="Transthyretin"/>
    <property type="match status" value="1"/>
</dbReference>
<dbReference type="Gene3D" id="2.60.40.180">
    <property type="entry name" value="Transthyretin/hydroxyisourate hydrolase domain"/>
    <property type="match status" value="1"/>
</dbReference>
<dbReference type="InterPro" id="IPR023418">
    <property type="entry name" value="Thyroxine_BS"/>
</dbReference>
<dbReference type="InterPro" id="IPR000895">
    <property type="entry name" value="Transthyretin/HIU_hydrolase"/>
</dbReference>
<dbReference type="InterPro" id="IPR023416">
    <property type="entry name" value="Transthyretin/HIU_hydrolase_d"/>
</dbReference>
<dbReference type="InterPro" id="IPR036817">
    <property type="entry name" value="Transthyretin/HIU_hydrolase_sf"/>
</dbReference>
<dbReference type="InterPro" id="IPR023419">
    <property type="entry name" value="Transthyretin_CS"/>
</dbReference>
<dbReference type="PANTHER" id="PTHR10395:SF12">
    <property type="entry name" value="TRANSTHYRETIN"/>
    <property type="match status" value="1"/>
</dbReference>
<dbReference type="PANTHER" id="PTHR10395">
    <property type="entry name" value="URICASE AND TRANSTHYRETIN-RELATED"/>
    <property type="match status" value="1"/>
</dbReference>
<dbReference type="Pfam" id="PF00576">
    <property type="entry name" value="Transthyretin"/>
    <property type="match status" value="1"/>
</dbReference>
<dbReference type="PRINTS" id="PR00189">
    <property type="entry name" value="TRNSTHYRETIN"/>
</dbReference>
<dbReference type="SMART" id="SM00095">
    <property type="entry name" value="TR_THY"/>
    <property type="match status" value="1"/>
</dbReference>
<dbReference type="SUPFAM" id="SSF49472">
    <property type="entry name" value="Transthyretin (synonym: prealbumin)"/>
    <property type="match status" value="1"/>
</dbReference>
<dbReference type="PROSITE" id="PS00768">
    <property type="entry name" value="TRANSTHYRETIN_1"/>
    <property type="match status" value="1"/>
</dbReference>
<dbReference type="PROSITE" id="PS00769">
    <property type="entry name" value="TRANSTHYRETIN_2"/>
    <property type="match status" value="1"/>
</dbReference>
<protein>
    <recommendedName>
        <fullName>Transthyretin</fullName>
    </recommendedName>
    <alternativeName>
        <fullName>Prealbumin</fullName>
    </alternativeName>
</protein>
<evidence type="ECO:0000250" key="1"/>
<evidence type="ECO:0000250" key="2">
    <source>
        <dbReference type="UniProtKB" id="P02766"/>
    </source>
</evidence>
<evidence type="ECO:0000250" key="3">
    <source>
        <dbReference type="UniProtKB" id="P02767"/>
    </source>
</evidence>
<evidence type="ECO:0000255" key="4"/>
<evidence type="ECO:0000305" key="5"/>
<organism>
    <name type="scientific">Erinaceus europaeus</name>
    <name type="common">Western European hedgehog</name>
    <dbReference type="NCBI Taxonomy" id="9365"/>
    <lineage>
        <taxon>Eukaryota</taxon>
        <taxon>Metazoa</taxon>
        <taxon>Chordata</taxon>
        <taxon>Craniata</taxon>
        <taxon>Vertebrata</taxon>
        <taxon>Euteleostomi</taxon>
        <taxon>Mammalia</taxon>
        <taxon>Eutheria</taxon>
        <taxon>Laurasiatheria</taxon>
        <taxon>Eulipotyphla</taxon>
        <taxon>Erinaceidae</taxon>
        <taxon>Erinaceinae</taxon>
        <taxon>Erinaceus</taxon>
    </lineage>
</organism>
<name>TTHY_ERIEU</name>
<feature type="signal peptide">
    <location>
        <begin position="1"/>
        <end position="20"/>
    </location>
</feature>
<feature type="chain" id="PRO_0000035754" description="Transthyretin">
    <location>
        <begin position="21"/>
        <end position="145"/>
    </location>
</feature>
<feature type="binding site" evidence="2">
    <location>
        <position position="33"/>
    </location>
    <ligand>
        <name>L-thyroxine</name>
        <dbReference type="ChEBI" id="CHEBI:58448"/>
    </ligand>
</feature>
<feature type="binding site" evidence="2">
    <location>
        <position position="72"/>
    </location>
    <ligand>
        <name>L-thyroxine</name>
        <dbReference type="ChEBI" id="CHEBI:58448"/>
    </ligand>
</feature>
<feature type="binding site" evidence="2">
    <location>
        <position position="135"/>
    </location>
    <ligand>
        <name>L-thyroxine</name>
        <dbReference type="ChEBI" id="CHEBI:58448"/>
    </ligand>
</feature>
<feature type="modified residue" description="Sulfocysteine" evidence="2">
    <location>
        <position position="28"/>
    </location>
</feature>
<feature type="modified residue" description="4-carboxyglutamate" evidence="2">
    <location>
        <position position="60"/>
    </location>
</feature>
<feature type="modified residue" description="Phosphoserine" evidence="3">
    <location>
        <position position="70"/>
    </location>
</feature>
<feature type="glycosylation site" description="N-linked (GlcNAc...) asparagine" evidence="4">
    <location>
        <position position="116"/>
    </location>
</feature>
<comment type="function">
    <text evidence="1">Thyroid hormone-binding protein. Probably transports thyroxine from the bloodstream to the brain (By similarity).</text>
</comment>
<comment type="subunit">
    <text evidence="1">Homotetramer. Dimer of dimers. In the homotetramer, subunits assemble around a central channel that can accommodate two ligand molecules. Interacts with RBP4 (By similarity).</text>
</comment>
<comment type="subcellular location">
    <subcellularLocation>
        <location evidence="1">Secreted</location>
    </subcellularLocation>
</comment>
<comment type="PTM">
    <text evidence="2">Sulfonation of the reactive cysteine Cys-28 enhances the stability of the native conformation of TTR, avoiding misassembly of the protein leading to amyloid formation.</text>
</comment>
<comment type="similarity">
    <text evidence="5">Belongs to the transthyretin family.</text>
</comment>
<proteinExistence type="evidence at transcript level"/>
<reference key="1">
    <citation type="journal article" date="2000" name="Mol. Biol. Evol.">
        <title>The evolution of the thyroid hormone distributor protein transthyretin in the order insectivora, class mammalia.</title>
        <authorList>
            <person name="Prapunpoj P."/>
            <person name="Richardson S.J."/>
            <person name="Fumagalli L."/>
            <person name="Schreiber G."/>
        </authorList>
    </citation>
    <scope>NUCLEOTIDE SEQUENCE [MRNA]</scope>
    <source>
        <tissue>Liver</tissue>
    </source>
</reference>